<reference key="1">
    <citation type="journal article" date="2012" name="Stand. Genomic Sci.">
        <title>Complete genome sequence of Polynucleobacter necessarius subsp. asymbioticus type strain (QLW-P1DMWA-1(T)).</title>
        <authorList>
            <person name="Meincke L."/>
            <person name="Copeland A."/>
            <person name="Lapidus A."/>
            <person name="Lucas S."/>
            <person name="Berry K.W."/>
            <person name="Del Rio T.G."/>
            <person name="Hammon N."/>
            <person name="Dalin E."/>
            <person name="Tice H."/>
            <person name="Pitluck S."/>
            <person name="Richardson P."/>
            <person name="Bruce D."/>
            <person name="Goodwin L."/>
            <person name="Han C."/>
            <person name="Tapia R."/>
            <person name="Detter J.C."/>
            <person name="Schmutz J."/>
            <person name="Brettin T."/>
            <person name="Larimer F."/>
            <person name="Land M."/>
            <person name="Hauser L."/>
            <person name="Kyrpides N.C."/>
            <person name="Ivanova N."/>
            <person name="Goker M."/>
            <person name="Woyke T."/>
            <person name="Wu Q.L."/>
            <person name="Pockl M."/>
            <person name="Hahn M.W."/>
            <person name="Klenk H.P."/>
        </authorList>
    </citation>
    <scope>NUCLEOTIDE SEQUENCE [LARGE SCALE GENOMIC DNA]</scope>
    <source>
        <strain>DSM 18221 / CIP 109841 / QLW-P1DMWA-1</strain>
    </source>
</reference>
<protein>
    <recommendedName>
        <fullName evidence="1">UDP-N-acetylenolpyruvoylglucosamine reductase</fullName>
        <ecNumber evidence="1">1.3.1.98</ecNumber>
    </recommendedName>
    <alternativeName>
        <fullName evidence="1">UDP-N-acetylmuramate dehydrogenase</fullName>
    </alternativeName>
</protein>
<feature type="chain" id="PRO_0000332489" description="UDP-N-acetylenolpyruvoylglucosamine reductase">
    <location>
        <begin position="1"/>
        <end position="345"/>
    </location>
</feature>
<feature type="domain" description="FAD-binding PCMH-type" evidence="1">
    <location>
        <begin position="27"/>
        <end position="197"/>
    </location>
</feature>
<feature type="active site" evidence="1">
    <location>
        <position position="174"/>
    </location>
</feature>
<feature type="active site" description="Proton donor" evidence="1">
    <location>
        <position position="245"/>
    </location>
</feature>
<feature type="active site" evidence="1">
    <location>
        <position position="341"/>
    </location>
</feature>
<name>MURB_POLAQ</name>
<accession>A4SVJ6</accession>
<organism>
    <name type="scientific">Polynucleobacter asymbioticus (strain DSM 18221 / CIP 109841 / QLW-P1DMWA-1)</name>
    <name type="common">Polynucleobacter necessarius subsp. asymbioticus</name>
    <dbReference type="NCBI Taxonomy" id="312153"/>
    <lineage>
        <taxon>Bacteria</taxon>
        <taxon>Pseudomonadati</taxon>
        <taxon>Pseudomonadota</taxon>
        <taxon>Betaproteobacteria</taxon>
        <taxon>Burkholderiales</taxon>
        <taxon>Burkholderiaceae</taxon>
        <taxon>Polynucleobacter</taxon>
    </lineage>
</organism>
<comment type="function">
    <text evidence="1">Cell wall formation.</text>
</comment>
<comment type="catalytic activity">
    <reaction evidence="1">
        <text>UDP-N-acetyl-alpha-D-muramate + NADP(+) = UDP-N-acetyl-3-O-(1-carboxyvinyl)-alpha-D-glucosamine + NADPH + H(+)</text>
        <dbReference type="Rhea" id="RHEA:12248"/>
        <dbReference type="ChEBI" id="CHEBI:15378"/>
        <dbReference type="ChEBI" id="CHEBI:57783"/>
        <dbReference type="ChEBI" id="CHEBI:58349"/>
        <dbReference type="ChEBI" id="CHEBI:68483"/>
        <dbReference type="ChEBI" id="CHEBI:70757"/>
        <dbReference type="EC" id="1.3.1.98"/>
    </reaction>
</comment>
<comment type="cofactor">
    <cofactor evidence="1">
        <name>FAD</name>
        <dbReference type="ChEBI" id="CHEBI:57692"/>
    </cofactor>
</comment>
<comment type="pathway">
    <text evidence="1">Cell wall biogenesis; peptidoglycan biosynthesis.</text>
</comment>
<comment type="subcellular location">
    <subcellularLocation>
        <location evidence="1">Cytoplasm</location>
    </subcellularLocation>
</comment>
<comment type="similarity">
    <text evidence="1">Belongs to the MurB family.</text>
</comment>
<gene>
    <name evidence="1" type="primary">murB</name>
    <name type="ordered locus">Pnuc_0289</name>
</gene>
<dbReference type="EC" id="1.3.1.98" evidence="1"/>
<dbReference type="EMBL" id="CP000655">
    <property type="protein sequence ID" value="ABP33510.1"/>
    <property type="molecule type" value="Genomic_DNA"/>
</dbReference>
<dbReference type="RefSeq" id="WP_011902135.1">
    <property type="nucleotide sequence ID" value="NC_009379.1"/>
</dbReference>
<dbReference type="SMR" id="A4SVJ6"/>
<dbReference type="GeneID" id="31480639"/>
<dbReference type="KEGG" id="pnu:Pnuc_0289"/>
<dbReference type="eggNOG" id="COG0812">
    <property type="taxonomic scope" value="Bacteria"/>
</dbReference>
<dbReference type="HOGENOM" id="CLU_035304_0_0_4"/>
<dbReference type="UniPathway" id="UPA00219"/>
<dbReference type="Proteomes" id="UP000000231">
    <property type="component" value="Chromosome"/>
</dbReference>
<dbReference type="GO" id="GO:0005829">
    <property type="term" value="C:cytosol"/>
    <property type="evidence" value="ECO:0007669"/>
    <property type="project" value="TreeGrafter"/>
</dbReference>
<dbReference type="GO" id="GO:0071949">
    <property type="term" value="F:FAD binding"/>
    <property type="evidence" value="ECO:0007669"/>
    <property type="project" value="InterPro"/>
</dbReference>
<dbReference type="GO" id="GO:0008762">
    <property type="term" value="F:UDP-N-acetylmuramate dehydrogenase activity"/>
    <property type="evidence" value="ECO:0007669"/>
    <property type="project" value="UniProtKB-UniRule"/>
</dbReference>
<dbReference type="GO" id="GO:0051301">
    <property type="term" value="P:cell division"/>
    <property type="evidence" value="ECO:0007669"/>
    <property type="project" value="UniProtKB-KW"/>
</dbReference>
<dbReference type="GO" id="GO:0071555">
    <property type="term" value="P:cell wall organization"/>
    <property type="evidence" value="ECO:0007669"/>
    <property type="project" value="UniProtKB-KW"/>
</dbReference>
<dbReference type="GO" id="GO:0009252">
    <property type="term" value="P:peptidoglycan biosynthetic process"/>
    <property type="evidence" value="ECO:0007669"/>
    <property type="project" value="UniProtKB-UniRule"/>
</dbReference>
<dbReference type="GO" id="GO:0008360">
    <property type="term" value="P:regulation of cell shape"/>
    <property type="evidence" value="ECO:0007669"/>
    <property type="project" value="UniProtKB-KW"/>
</dbReference>
<dbReference type="Gene3D" id="3.30.465.10">
    <property type="match status" value="1"/>
</dbReference>
<dbReference type="Gene3D" id="3.90.78.10">
    <property type="entry name" value="UDP-N-acetylenolpyruvoylglucosamine reductase, C-terminal domain"/>
    <property type="match status" value="1"/>
</dbReference>
<dbReference type="Gene3D" id="3.30.43.10">
    <property type="entry name" value="Uridine Diphospho-n-acetylenolpyruvylglucosamine Reductase, domain 2"/>
    <property type="match status" value="1"/>
</dbReference>
<dbReference type="HAMAP" id="MF_00037">
    <property type="entry name" value="MurB"/>
    <property type="match status" value="1"/>
</dbReference>
<dbReference type="InterPro" id="IPR016166">
    <property type="entry name" value="FAD-bd_PCMH"/>
</dbReference>
<dbReference type="InterPro" id="IPR036318">
    <property type="entry name" value="FAD-bd_PCMH-like_sf"/>
</dbReference>
<dbReference type="InterPro" id="IPR016167">
    <property type="entry name" value="FAD-bd_PCMH_sub1"/>
</dbReference>
<dbReference type="InterPro" id="IPR016169">
    <property type="entry name" value="FAD-bd_PCMH_sub2"/>
</dbReference>
<dbReference type="InterPro" id="IPR003170">
    <property type="entry name" value="MurB"/>
</dbReference>
<dbReference type="InterPro" id="IPR011601">
    <property type="entry name" value="MurB_C"/>
</dbReference>
<dbReference type="InterPro" id="IPR036635">
    <property type="entry name" value="MurB_C_sf"/>
</dbReference>
<dbReference type="InterPro" id="IPR006094">
    <property type="entry name" value="Oxid_FAD_bind_N"/>
</dbReference>
<dbReference type="NCBIfam" id="TIGR00179">
    <property type="entry name" value="murB"/>
    <property type="match status" value="1"/>
</dbReference>
<dbReference type="NCBIfam" id="NF000755">
    <property type="entry name" value="PRK00046.1"/>
    <property type="match status" value="1"/>
</dbReference>
<dbReference type="PANTHER" id="PTHR21071">
    <property type="entry name" value="UDP-N-ACETYLENOLPYRUVOYLGLUCOSAMINE REDUCTASE"/>
    <property type="match status" value="1"/>
</dbReference>
<dbReference type="PANTHER" id="PTHR21071:SF4">
    <property type="entry name" value="UDP-N-ACETYLENOLPYRUVOYLGLUCOSAMINE REDUCTASE"/>
    <property type="match status" value="1"/>
</dbReference>
<dbReference type="Pfam" id="PF01565">
    <property type="entry name" value="FAD_binding_4"/>
    <property type="match status" value="1"/>
</dbReference>
<dbReference type="Pfam" id="PF02873">
    <property type="entry name" value="MurB_C"/>
    <property type="match status" value="1"/>
</dbReference>
<dbReference type="SUPFAM" id="SSF56176">
    <property type="entry name" value="FAD-binding/transporter-associated domain-like"/>
    <property type="match status" value="1"/>
</dbReference>
<dbReference type="SUPFAM" id="SSF56194">
    <property type="entry name" value="Uridine diphospho-N-Acetylenolpyruvylglucosamine reductase, MurB, C-terminal domain"/>
    <property type="match status" value="1"/>
</dbReference>
<dbReference type="PROSITE" id="PS51387">
    <property type="entry name" value="FAD_PCMH"/>
    <property type="match status" value="1"/>
</dbReference>
<keyword id="KW-0131">Cell cycle</keyword>
<keyword id="KW-0132">Cell division</keyword>
<keyword id="KW-0133">Cell shape</keyword>
<keyword id="KW-0961">Cell wall biogenesis/degradation</keyword>
<keyword id="KW-0963">Cytoplasm</keyword>
<keyword id="KW-0274">FAD</keyword>
<keyword id="KW-0285">Flavoprotein</keyword>
<keyword id="KW-0521">NADP</keyword>
<keyword id="KW-0560">Oxidoreductase</keyword>
<keyword id="KW-0573">Peptidoglycan synthesis</keyword>
<keyword id="KW-1185">Reference proteome</keyword>
<sequence length="345" mass="37603">MNRAQNAPQPSKLTRNLGLQGRNTFGFDASAELAYEITSAEQIPEVMESIAAQKLSWRVLGGGSNVILPKVLPGATLLMNITGAEITSSNQEHSLVAVGGGVNWHDFVLWSLDNDLPGLENLALIPGTVGAAPIQNIGAYGIEVADYIDSIEAFDAHTDSFVTLPKSACHFAYRDSYFKQHPHRFIVTKVVFKLPKQWQARIHYADLANQFAANATPCPEEIFLAVCKIRTRKLPDPKVIGNAGSFFQNPIVPNEQHETLLGKHPNLVSYPDAPGKRKLAAGWLIDQCGFKGERMGNVGVYENQALVLVNHGGGTAQDILGLAKCIQEKVRKEFGVSLEIEPNIL</sequence>
<proteinExistence type="inferred from homology"/>
<evidence type="ECO:0000255" key="1">
    <source>
        <dbReference type="HAMAP-Rule" id="MF_00037"/>
    </source>
</evidence>